<proteinExistence type="inferred from homology"/>
<sequence>MSKQHTAQAPVDPIVLGKMGSSYGIRGWLRVFSSTEDAESIFDYQPWLIQKAGQWQVVELEGWRHHNQDIIIKLKGVDDRDAANLLTNCEIIVDSSQLPELEEGDYYWKDLMGCQVVTTEGYSLGKVIDMMETGSNDVLVIKANLKDAFGIKERLVPFLDGQVIKKVDLTTRTIEVDWDPGF</sequence>
<keyword id="KW-0143">Chaperone</keyword>
<keyword id="KW-0963">Cytoplasm</keyword>
<keyword id="KW-0690">Ribosome biogenesis</keyword>
<keyword id="KW-0698">rRNA processing</keyword>
<evidence type="ECO:0000255" key="1">
    <source>
        <dbReference type="HAMAP-Rule" id="MF_00014"/>
    </source>
</evidence>
<reference key="1">
    <citation type="journal article" date="2008" name="PLoS Genet.">
        <title>Complete genome sequence of the N2-fixing broad host range endophyte Klebsiella pneumoniae 342 and virulence predictions verified in mice.</title>
        <authorList>
            <person name="Fouts D.E."/>
            <person name="Tyler H.L."/>
            <person name="DeBoy R.T."/>
            <person name="Daugherty S."/>
            <person name="Ren Q."/>
            <person name="Badger J.H."/>
            <person name="Durkin A.S."/>
            <person name="Huot H."/>
            <person name="Shrivastava S."/>
            <person name="Kothari S."/>
            <person name="Dodson R.J."/>
            <person name="Mohamoud Y."/>
            <person name="Khouri H."/>
            <person name="Roesch L.F.W."/>
            <person name="Krogfelt K.A."/>
            <person name="Struve C."/>
            <person name="Triplett E.W."/>
            <person name="Methe B.A."/>
        </authorList>
    </citation>
    <scope>NUCLEOTIDE SEQUENCE [LARGE SCALE GENOMIC DNA]</scope>
    <source>
        <strain>342</strain>
    </source>
</reference>
<gene>
    <name evidence="1" type="primary">rimM</name>
    <name type="ordered locus">KPK_1189</name>
</gene>
<dbReference type="EMBL" id="CP000964">
    <property type="protein sequence ID" value="ACI07934.1"/>
    <property type="molecule type" value="Genomic_DNA"/>
</dbReference>
<dbReference type="SMR" id="B5XVK4"/>
<dbReference type="KEGG" id="kpe:KPK_1189"/>
<dbReference type="HOGENOM" id="CLU_077636_1_0_6"/>
<dbReference type="Proteomes" id="UP000001734">
    <property type="component" value="Chromosome"/>
</dbReference>
<dbReference type="GO" id="GO:0005737">
    <property type="term" value="C:cytoplasm"/>
    <property type="evidence" value="ECO:0007669"/>
    <property type="project" value="UniProtKB-SubCell"/>
</dbReference>
<dbReference type="GO" id="GO:0005840">
    <property type="term" value="C:ribosome"/>
    <property type="evidence" value="ECO:0007669"/>
    <property type="project" value="InterPro"/>
</dbReference>
<dbReference type="GO" id="GO:0043022">
    <property type="term" value="F:ribosome binding"/>
    <property type="evidence" value="ECO:0007669"/>
    <property type="project" value="InterPro"/>
</dbReference>
<dbReference type="GO" id="GO:0042274">
    <property type="term" value="P:ribosomal small subunit biogenesis"/>
    <property type="evidence" value="ECO:0007669"/>
    <property type="project" value="UniProtKB-UniRule"/>
</dbReference>
<dbReference type="GO" id="GO:0006364">
    <property type="term" value="P:rRNA processing"/>
    <property type="evidence" value="ECO:0007669"/>
    <property type="project" value="UniProtKB-UniRule"/>
</dbReference>
<dbReference type="FunFam" id="2.30.30.240:FF:000001">
    <property type="entry name" value="Ribosome maturation factor RimM"/>
    <property type="match status" value="1"/>
</dbReference>
<dbReference type="FunFam" id="2.40.30.60:FF:000001">
    <property type="entry name" value="Ribosome maturation factor RimM"/>
    <property type="match status" value="1"/>
</dbReference>
<dbReference type="Gene3D" id="2.30.30.240">
    <property type="entry name" value="PRC-barrel domain"/>
    <property type="match status" value="1"/>
</dbReference>
<dbReference type="Gene3D" id="2.40.30.60">
    <property type="entry name" value="RimM"/>
    <property type="match status" value="1"/>
</dbReference>
<dbReference type="HAMAP" id="MF_00014">
    <property type="entry name" value="Ribosome_mat_RimM"/>
    <property type="match status" value="1"/>
</dbReference>
<dbReference type="InterPro" id="IPR011033">
    <property type="entry name" value="PRC_barrel-like_sf"/>
</dbReference>
<dbReference type="InterPro" id="IPR056792">
    <property type="entry name" value="PRC_RimM"/>
</dbReference>
<dbReference type="InterPro" id="IPR011961">
    <property type="entry name" value="RimM"/>
</dbReference>
<dbReference type="InterPro" id="IPR002676">
    <property type="entry name" value="RimM_N"/>
</dbReference>
<dbReference type="InterPro" id="IPR036976">
    <property type="entry name" value="RimM_N_sf"/>
</dbReference>
<dbReference type="InterPro" id="IPR009000">
    <property type="entry name" value="Transl_B-barrel_sf"/>
</dbReference>
<dbReference type="NCBIfam" id="TIGR02273">
    <property type="entry name" value="16S_RimM"/>
    <property type="match status" value="1"/>
</dbReference>
<dbReference type="PANTHER" id="PTHR33692">
    <property type="entry name" value="RIBOSOME MATURATION FACTOR RIMM"/>
    <property type="match status" value="1"/>
</dbReference>
<dbReference type="PANTHER" id="PTHR33692:SF1">
    <property type="entry name" value="RIBOSOME MATURATION FACTOR RIMM"/>
    <property type="match status" value="1"/>
</dbReference>
<dbReference type="Pfam" id="PF24986">
    <property type="entry name" value="PRC_RimM"/>
    <property type="match status" value="1"/>
</dbReference>
<dbReference type="Pfam" id="PF01782">
    <property type="entry name" value="RimM"/>
    <property type="match status" value="1"/>
</dbReference>
<dbReference type="SUPFAM" id="SSF50346">
    <property type="entry name" value="PRC-barrel domain"/>
    <property type="match status" value="1"/>
</dbReference>
<dbReference type="SUPFAM" id="SSF50447">
    <property type="entry name" value="Translation proteins"/>
    <property type="match status" value="1"/>
</dbReference>
<protein>
    <recommendedName>
        <fullName evidence="1">Ribosome maturation factor RimM</fullName>
    </recommendedName>
</protein>
<organism>
    <name type="scientific">Klebsiella pneumoniae (strain 342)</name>
    <dbReference type="NCBI Taxonomy" id="507522"/>
    <lineage>
        <taxon>Bacteria</taxon>
        <taxon>Pseudomonadati</taxon>
        <taxon>Pseudomonadota</taxon>
        <taxon>Gammaproteobacteria</taxon>
        <taxon>Enterobacterales</taxon>
        <taxon>Enterobacteriaceae</taxon>
        <taxon>Klebsiella/Raoultella group</taxon>
        <taxon>Klebsiella</taxon>
        <taxon>Klebsiella pneumoniae complex</taxon>
    </lineage>
</organism>
<feature type="chain" id="PRO_1000089503" description="Ribosome maturation factor RimM">
    <location>
        <begin position="1"/>
        <end position="182"/>
    </location>
</feature>
<feature type="domain" description="PRC barrel" evidence="1">
    <location>
        <begin position="102"/>
        <end position="182"/>
    </location>
</feature>
<name>RIMM_KLEP3</name>
<comment type="function">
    <text evidence="1">An accessory protein needed during the final step in the assembly of 30S ribosomal subunit, possibly for assembly of the head region. Essential for efficient processing of 16S rRNA. May be needed both before and after RbfA during the maturation of 16S rRNA. It has affinity for free ribosomal 30S subunits but not for 70S ribosomes.</text>
</comment>
<comment type="subunit">
    <text evidence="1">Binds ribosomal protein uS19.</text>
</comment>
<comment type="subcellular location">
    <subcellularLocation>
        <location evidence="1">Cytoplasm</location>
    </subcellularLocation>
</comment>
<comment type="domain">
    <text evidence="1">The PRC barrel domain binds ribosomal protein uS19.</text>
</comment>
<comment type="similarity">
    <text evidence="1">Belongs to the RimM family.</text>
</comment>
<accession>B5XVK4</accession>